<dbReference type="EMBL" id="CP000891">
    <property type="protein sequence ID" value="ABX47372.1"/>
    <property type="molecule type" value="Genomic_DNA"/>
</dbReference>
<dbReference type="RefSeq" id="WP_006083610.1">
    <property type="nucleotide sequence ID" value="NC_009997.1"/>
</dbReference>
<dbReference type="SMR" id="A9KW92"/>
<dbReference type="GeneID" id="11770550"/>
<dbReference type="KEGG" id="sbn:Sbal195_0190"/>
<dbReference type="HOGENOM" id="CLU_062853_0_0_6"/>
<dbReference type="Proteomes" id="UP000000770">
    <property type="component" value="Chromosome"/>
</dbReference>
<dbReference type="GO" id="GO:0022625">
    <property type="term" value="C:cytosolic large ribosomal subunit"/>
    <property type="evidence" value="ECO:0007669"/>
    <property type="project" value="TreeGrafter"/>
</dbReference>
<dbReference type="GO" id="GO:0019843">
    <property type="term" value="F:rRNA binding"/>
    <property type="evidence" value="ECO:0007669"/>
    <property type="project" value="UniProtKB-UniRule"/>
</dbReference>
<dbReference type="GO" id="GO:0003735">
    <property type="term" value="F:structural constituent of ribosome"/>
    <property type="evidence" value="ECO:0007669"/>
    <property type="project" value="InterPro"/>
</dbReference>
<dbReference type="GO" id="GO:0000049">
    <property type="term" value="F:tRNA binding"/>
    <property type="evidence" value="ECO:0007669"/>
    <property type="project" value="UniProtKB-KW"/>
</dbReference>
<dbReference type="GO" id="GO:0006417">
    <property type="term" value="P:regulation of translation"/>
    <property type="evidence" value="ECO:0007669"/>
    <property type="project" value="UniProtKB-KW"/>
</dbReference>
<dbReference type="GO" id="GO:0006412">
    <property type="term" value="P:translation"/>
    <property type="evidence" value="ECO:0007669"/>
    <property type="project" value="UniProtKB-UniRule"/>
</dbReference>
<dbReference type="CDD" id="cd00403">
    <property type="entry name" value="Ribosomal_L1"/>
    <property type="match status" value="1"/>
</dbReference>
<dbReference type="FunFam" id="3.40.50.790:FF:000001">
    <property type="entry name" value="50S ribosomal protein L1"/>
    <property type="match status" value="1"/>
</dbReference>
<dbReference type="Gene3D" id="3.30.190.20">
    <property type="match status" value="1"/>
</dbReference>
<dbReference type="Gene3D" id="3.40.50.790">
    <property type="match status" value="1"/>
</dbReference>
<dbReference type="HAMAP" id="MF_01318_B">
    <property type="entry name" value="Ribosomal_uL1_B"/>
    <property type="match status" value="1"/>
</dbReference>
<dbReference type="InterPro" id="IPR005878">
    <property type="entry name" value="Ribosom_uL1_bac-type"/>
</dbReference>
<dbReference type="InterPro" id="IPR002143">
    <property type="entry name" value="Ribosomal_uL1"/>
</dbReference>
<dbReference type="InterPro" id="IPR023674">
    <property type="entry name" value="Ribosomal_uL1-like"/>
</dbReference>
<dbReference type="InterPro" id="IPR028364">
    <property type="entry name" value="Ribosomal_uL1/biogenesis"/>
</dbReference>
<dbReference type="InterPro" id="IPR016095">
    <property type="entry name" value="Ribosomal_uL1_3-a/b-sand"/>
</dbReference>
<dbReference type="InterPro" id="IPR023673">
    <property type="entry name" value="Ribosomal_uL1_CS"/>
</dbReference>
<dbReference type="NCBIfam" id="TIGR01169">
    <property type="entry name" value="rplA_bact"/>
    <property type="match status" value="1"/>
</dbReference>
<dbReference type="PANTHER" id="PTHR36427">
    <property type="entry name" value="54S RIBOSOMAL PROTEIN L1, MITOCHONDRIAL"/>
    <property type="match status" value="1"/>
</dbReference>
<dbReference type="PANTHER" id="PTHR36427:SF3">
    <property type="entry name" value="LARGE RIBOSOMAL SUBUNIT PROTEIN UL1M"/>
    <property type="match status" value="1"/>
</dbReference>
<dbReference type="Pfam" id="PF00687">
    <property type="entry name" value="Ribosomal_L1"/>
    <property type="match status" value="1"/>
</dbReference>
<dbReference type="PIRSF" id="PIRSF002155">
    <property type="entry name" value="Ribosomal_L1"/>
    <property type="match status" value="1"/>
</dbReference>
<dbReference type="SUPFAM" id="SSF56808">
    <property type="entry name" value="Ribosomal protein L1"/>
    <property type="match status" value="1"/>
</dbReference>
<dbReference type="PROSITE" id="PS01199">
    <property type="entry name" value="RIBOSOMAL_L1"/>
    <property type="match status" value="1"/>
</dbReference>
<feature type="chain" id="PRO_1000086305" description="Large ribosomal subunit protein uL1">
    <location>
        <begin position="1"/>
        <end position="233"/>
    </location>
</feature>
<name>RL1_SHEB9</name>
<reference key="1">
    <citation type="submission" date="2007-11" db="EMBL/GenBank/DDBJ databases">
        <title>Complete sequence of chromosome of Shewanella baltica OS195.</title>
        <authorList>
            <consortium name="US DOE Joint Genome Institute"/>
            <person name="Copeland A."/>
            <person name="Lucas S."/>
            <person name="Lapidus A."/>
            <person name="Barry K."/>
            <person name="Glavina del Rio T."/>
            <person name="Dalin E."/>
            <person name="Tice H."/>
            <person name="Pitluck S."/>
            <person name="Chain P."/>
            <person name="Malfatti S."/>
            <person name="Shin M."/>
            <person name="Vergez L."/>
            <person name="Schmutz J."/>
            <person name="Larimer F."/>
            <person name="Land M."/>
            <person name="Hauser L."/>
            <person name="Kyrpides N."/>
            <person name="Kim E."/>
            <person name="Brettar I."/>
            <person name="Rodrigues J."/>
            <person name="Konstantinidis K."/>
            <person name="Klappenbach J."/>
            <person name="Hofle M."/>
            <person name="Tiedje J."/>
            <person name="Richardson P."/>
        </authorList>
    </citation>
    <scope>NUCLEOTIDE SEQUENCE [LARGE SCALE GENOMIC DNA]</scope>
    <source>
        <strain>OS195</strain>
    </source>
</reference>
<proteinExistence type="inferred from homology"/>
<gene>
    <name evidence="1" type="primary">rplA</name>
    <name type="ordered locus">Sbal195_0190</name>
</gene>
<accession>A9KW92</accession>
<protein>
    <recommendedName>
        <fullName evidence="1">Large ribosomal subunit protein uL1</fullName>
    </recommendedName>
    <alternativeName>
        <fullName evidence="2">50S ribosomal protein L1</fullName>
    </alternativeName>
</protein>
<comment type="function">
    <text evidence="1">Binds directly to 23S rRNA. The L1 stalk is quite mobile in the ribosome, and is involved in E site tRNA release.</text>
</comment>
<comment type="function">
    <text evidence="1">Protein L1 is also a translational repressor protein, it controls the translation of the L11 operon by binding to its mRNA.</text>
</comment>
<comment type="subunit">
    <text evidence="1">Part of the 50S ribosomal subunit.</text>
</comment>
<comment type="similarity">
    <text evidence="1">Belongs to the universal ribosomal protein uL1 family.</text>
</comment>
<sequence length="233" mass="24602">MAKLTKRMRVIREKVDGTKSYDINEAVALLKELATAKFVESVDVAVNLGIDPRKSDQNVRGATVLPHGTGRDVRVAVFTQGANAEAAKAAGAELVGMDDLAEKIKAGEMNFDVVIASPDAMRVVGMLGQILGPRGLMPNPKTGTVTPNVAEAVKNAKAGQVRYRNDKNGIIHTTIGKVDFTPVQLKENLEALVSALKKAKPAVAKGIFVKKISISTTMGAGVAVDQATLETTV</sequence>
<evidence type="ECO:0000255" key="1">
    <source>
        <dbReference type="HAMAP-Rule" id="MF_01318"/>
    </source>
</evidence>
<evidence type="ECO:0000305" key="2"/>
<keyword id="KW-0678">Repressor</keyword>
<keyword id="KW-0687">Ribonucleoprotein</keyword>
<keyword id="KW-0689">Ribosomal protein</keyword>
<keyword id="KW-0694">RNA-binding</keyword>
<keyword id="KW-0699">rRNA-binding</keyword>
<keyword id="KW-0810">Translation regulation</keyword>
<keyword id="KW-0820">tRNA-binding</keyword>
<organism>
    <name type="scientific">Shewanella baltica (strain OS195)</name>
    <dbReference type="NCBI Taxonomy" id="399599"/>
    <lineage>
        <taxon>Bacteria</taxon>
        <taxon>Pseudomonadati</taxon>
        <taxon>Pseudomonadota</taxon>
        <taxon>Gammaproteobacteria</taxon>
        <taxon>Alteromonadales</taxon>
        <taxon>Shewanellaceae</taxon>
        <taxon>Shewanella</taxon>
    </lineage>
</organism>